<name>BOP1_LEIMA</name>
<keyword id="KW-0539">Nucleus</keyword>
<keyword id="KW-1185">Reference proteome</keyword>
<keyword id="KW-0677">Repeat</keyword>
<keyword id="KW-0690">Ribosome biogenesis</keyword>
<keyword id="KW-0698">rRNA processing</keyword>
<keyword id="KW-0853">WD repeat</keyword>
<comment type="function">
    <text evidence="1">Required for maturation of ribosomal RNAs and formation of the large ribosomal subunit.</text>
</comment>
<comment type="subcellular location">
    <subcellularLocation>
        <location evidence="1">Nucleus</location>
        <location evidence="1">Nucleolus</location>
    </subcellularLocation>
    <subcellularLocation>
        <location evidence="1">Nucleus</location>
        <location evidence="1">Nucleoplasm</location>
    </subcellularLocation>
</comment>
<comment type="similarity">
    <text evidence="1">Belongs to the WD repeat BOP1/ERB1 family.</text>
</comment>
<gene>
    <name type="ORF">LmjF11.0410</name>
    <name type="ORF">LmjF_11_0410</name>
</gene>
<sequence>MTSPKGKPSPKRSAPAPATAALTPCAEERTEGATSSASASASSHISSSFDSPRDDTVVLTGYTAESEHSAHGYERLHDIILQGSDTDADSEDGRANEDDVILFPHAEELSNAAAGVGGDDDNGRVVRLGTTQHLDESDSSEDEPTLNRVGDIPLEWYKDEDHIGYDIEGKKLMKKERSALERLLEATDDPNAMRTIYDALHDEKKTLSNADLQLIFNLQRNRTTNPNYDMYSEVQEDTVVFDPLNHPLARSGGPSKKAFVPALHDMKVIAKMVRRLRKEEAERRLRPAKEEKEEEDQLLWDDSHVEMDTHTHFKYFNRIPKPKLPPPGTFESYRPPPEYLPSERAKQRQARLRTIDRKEHFLPQSFDALRHVPFYHHTIQDRYQRCLDLAFFPRAQRTRLVVDPDKLLPELPDPKDLRPYPEKLSFHYKGHTATVRSVSVSPNGQYLATGCDDHLVRVFEVQTGRLMKRYDMGAPVQQVEFCPSTSLNILAVAVEYSLVFIVPTFAAHTLVNDHTIRFLRAPGLSAGQREAAHALGAVDTLGGRAVTQTALDADETAHEATADLHDIEEREKRAEFVDASAKERNAGIVVKIAMHAKVKKFCFHIKGDYLCALCPKDHVKYRQTIMLQLSKRKVFCPFRKFSEVVTDCRFHPREPIFFLATTNSVRCYNLMAHRLQRRFKASGGVTTCLSIHPEGDNFLVGDTTSHTSWFDMDFSDKPYKRMRSHKGVVNALAFHPKTNAYPLFATGASDGQVHVFHGMVYDDYNKNALVVPVKILKHQRPVYAVAWHPTLAWLFTSTEDGVVTAWTE</sequence>
<proteinExistence type="inferred from homology"/>
<dbReference type="EMBL" id="FR796407">
    <property type="protein sequence ID" value="CAJ02534.1"/>
    <property type="molecule type" value="Genomic_DNA"/>
</dbReference>
<dbReference type="RefSeq" id="XP_001681509.1">
    <property type="nucleotide sequence ID" value="XM_001681457.1"/>
</dbReference>
<dbReference type="SMR" id="Q4QH39"/>
<dbReference type="FunCoup" id="Q4QH39">
    <property type="interactions" value="300"/>
</dbReference>
<dbReference type="STRING" id="5664.Q4QH39"/>
<dbReference type="EnsemblProtists" id="CAJ02534">
    <property type="protein sequence ID" value="CAJ02534"/>
    <property type="gene ID" value="LMJF_11_0410"/>
</dbReference>
<dbReference type="GeneID" id="5649783"/>
<dbReference type="KEGG" id="lma:LMJF_11_0410"/>
<dbReference type="VEuPathDB" id="TriTrypDB:LmjF.11.0410"/>
<dbReference type="VEuPathDB" id="TriTrypDB:LMJFC_110009800"/>
<dbReference type="VEuPathDB" id="TriTrypDB:LMJLV39_110009500"/>
<dbReference type="VEuPathDB" id="TriTrypDB:LMJSD75_110009600"/>
<dbReference type="VEuPathDB" id="TriTrypDB:LMJSD75_110009700"/>
<dbReference type="eggNOG" id="KOG0650">
    <property type="taxonomic scope" value="Eukaryota"/>
</dbReference>
<dbReference type="InParanoid" id="Q4QH39"/>
<dbReference type="OMA" id="MRPAKGE"/>
<dbReference type="Proteomes" id="UP000000542">
    <property type="component" value="Chromosome 11"/>
</dbReference>
<dbReference type="GO" id="GO:0005730">
    <property type="term" value="C:nucleolus"/>
    <property type="evidence" value="ECO:0000266"/>
    <property type="project" value="GeneDB"/>
</dbReference>
<dbReference type="GO" id="GO:0005654">
    <property type="term" value="C:nucleoplasm"/>
    <property type="evidence" value="ECO:0007669"/>
    <property type="project" value="UniProtKB-SubCell"/>
</dbReference>
<dbReference type="GO" id="GO:0070545">
    <property type="term" value="C:PeBoW complex"/>
    <property type="evidence" value="ECO:0000318"/>
    <property type="project" value="GO_Central"/>
</dbReference>
<dbReference type="GO" id="GO:0030687">
    <property type="term" value="C:preribosome, large subunit precursor"/>
    <property type="evidence" value="ECO:0000318"/>
    <property type="project" value="GO_Central"/>
</dbReference>
<dbReference type="GO" id="GO:0043021">
    <property type="term" value="F:ribonucleoprotein complex binding"/>
    <property type="evidence" value="ECO:0000318"/>
    <property type="project" value="GO_Central"/>
</dbReference>
<dbReference type="GO" id="GO:0000466">
    <property type="term" value="P:maturation of 5.8S rRNA from tricistronic rRNA transcript (SSU-rRNA, 5.8S rRNA, LSU-rRNA)"/>
    <property type="evidence" value="ECO:0007669"/>
    <property type="project" value="UniProtKB-UniRule"/>
</dbReference>
<dbReference type="GO" id="GO:0000463">
    <property type="term" value="P:maturation of LSU-rRNA from tricistronic rRNA transcript (SSU-rRNA, 5.8S rRNA, LSU-rRNA)"/>
    <property type="evidence" value="ECO:0000318"/>
    <property type="project" value="GO_Central"/>
</dbReference>
<dbReference type="Gene3D" id="2.130.10.10">
    <property type="entry name" value="YVTN repeat-like/Quinoprotein amine dehydrogenase"/>
    <property type="match status" value="1"/>
</dbReference>
<dbReference type="HAMAP" id="MF_03027">
    <property type="entry name" value="BOP1"/>
    <property type="match status" value="1"/>
</dbReference>
<dbReference type="InterPro" id="IPR028598">
    <property type="entry name" value="BOP1/Erb1"/>
</dbReference>
<dbReference type="InterPro" id="IPR012953">
    <property type="entry name" value="BOP1_N_dom"/>
</dbReference>
<dbReference type="InterPro" id="IPR015943">
    <property type="entry name" value="WD40/YVTN_repeat-like_dom_sf"/>
</dbReference>
<dbReference type="InterPro" id="IPR036322">
    <property type="entry name" value="WD40_repeat_dom_sf"/>
</dbReference>
<dbReference type="InterPro" id="IPR001680">
    <property type="entry name" value="WD40_rpt"/>
</dbReference>
<dbReference type="PANTHER" id="PTHR17605:SF0">
    <property type="entry name" value="RIBOSOME BIOGENESIS PROTEIN BOP1"/>
    <property type="match status" value="1"/>
</dbReference>
<dbReference type="PANTHER" id="PTHR17605">
    <property type="entry name" value="RIBOSOME BIOGENESIS PROTEIN BOP1 BLOCK OF PROLIFERATION 1 PROTEIN"/>
    <property type="match status" value="1"/>
</dbReference>
<dbReference type="Pfam" id="PF08145">
    <property type="entry name" value="BOP1NT"/>
    <property type="match status" value="1"/>
</dbReference>
<dbReference type="Pfam" id="PF00400">
    <property type="entry name" value="WD40"/>
    <property type="match status" value="3"/>
</dbReference>
<dbReference type="SMART" id="SM01035">
    <property type="entry name" value="BOP1NT"/>
    <property type="match status" value="1"/>
</dbReference>
<dbReference type="SMART" id="SM00320">
    <property type="entry name" value="WD40"/>
    <property type="match status" value="5"/>
</dbReference>
<dbReference type="SUPFAM" id="SSF50978">
    <property type="entry name" value="WD40 repeat-like"/>
    <property type="match status" value="1"/>
</dbReference>
<dbReference type="PROSITE" id="PS50082">
    <property type="entry name" value="WD_REPEATS_2"/>
    <property type="match status" value="2"/>
</dbReference>
<dbReference type="PROSITE" id="PS50294">
    <property type="entry name" value="WD_REPEATS_REGION"/>
    <property type="match status" value="2"/>
</dbReference>
<evidence type="ECO:0000255" key="1">
    <source>
        <dbReference type="HAMAP-Rule" id="MF_03027"/>
    </source>
</evidence>
<evidence type="ECO:0000256" key="2">
    <source>
        <dbReference type="SAM" id="MobiDB-lite"/>
    </source>
</evidence>
<protein>
    <recommendedName>
        <fullName evidence="1">Ribosome biogenesis protein BOP1 homolog</fullName>
    </recommendedName>
</protein>
<organism>
    <name type="scientific">Leishmania major</name>
    <dbReference type="NCBI Taxonomy" id="5664"/>
    <lineage>
        <taxon>Eukaryota</taxon>
        <taxon>Discoba</taxon>
        <taxon>Euglenozoa</taxon>
        <taxon>Kinetoplastea</taxon>
        <taxon>Metakinetoplastina</taxon>
        <taxon>Trypanosomatida</taxon>
        <taxon>Trypanosomatidae</taxon>
        <taxon>Leishmaniinae</taxon>
        <taxon>Leishmania</taxon>
    </lineage>
</organism>
<accession>Q4QH39</accession>
<reference key="1">
    <citation type="journal article" date="2005" name="Science">
        <title>The genome of the kinetoplastid parasite, Leishmania major.</title>
        <authorList>
            <person name="Ivens A.C."/>
            <person name="Peacock C.S."/>
            <person name="Worthey E.A."/>
            <person name="Murphy L."/>
            <person name="Aggarwal G."/>
            <person name="Berriman M."/>
            <person name="Sisk E."/>
            <person name="Rajandream M.A."/>
            <person name="Adlem E."/>
            <person name="Aert R."/>
            <person name="Anupama A."/>
            <person name="Apostolou Z."/>
            <person name="Attipoe P."/>
            <person name="Bason N."/>
            <person name="Bauser C."/>
            <person name="Beck A."/>
            <person name="Beverley S.M."/>
            <person name="Bianchettin G."/>
            <person name="Borzym K."/>
            <person name="Bothe G."/>
            <person name="Bruschi C.V."/>
            <person name="Collins M."/>
            <person name="Cadag E."/>
            <person name="Ciarloni L."/>
            <person name="Clayton C."/>
            <person name="Coulson R.M.R."/>
            <person name="Cronin A."/>
            <person name="Cruz A.K."/>
            <person name="Davies R.M."/>
            <person name="De Gaudenzi J."/>
            <person name="Dobson D.E."/>
            <person name="Duesterhoeft A."/>
            <person name="Fazelina G."/>
            <person name="Fosker N."/>
            <person name="Frasch A.C."/>
            <person name="Fraser A."/>
            <person name="Fuchs M."/>
            <person name="Gabel C."/>
            <person name="Goble A."/>
            <person name="Goffeau A."/>
            <person name="Harris D."/>
            <person name="Hertz-Fowler C."/>
            <person name="Hilbert H."/>
            <person name="Horn D."/>
            <person name="Huang Y."/>
            <person name="Klages S."/>
            <person name="Knights A."/>
            <person name="Kube M."/>
            <person name="Larke N."/>
            <person name="Litvin L."/>
            <person name="Lord A."/>
            <person name="Louie T."/>
            <person name="Marra M."/>
            <person name="Masuy D."/>
            <person name="Matthews K."/>
            <person name="Michaeli S."/>
            <person name="Mottram J.C."/>
            <person name="Mueller-Auer S."/>
            <person name="Munden H."/>
            <person name="Nelson S."/>
            <person name="Norbertczak H."/>
            <person name="Oliver K."/>
            <person name="O'neil S."/>
            <person name="Pentony M."/>
            <person name="Pohl T.M."/>
            <person name="Price C."/>
            <person name="Purnelle B."/>
            <person name="Quail M.A."/>
            <person name="Rabbinowitsch E."/>
            <person name="Reinhardt R."/>
            <person name="Rieger M."/>
            <person name="Rinta J."/>
            <person name="Robben J."/>
            <person name="Robertson L."/>
            <person name="Ruiz J.C."/>
            <person name="Rutter S."/>
            <person name="Saunders D."/>
            <person name="Schaefer M."/>
            <person name="Schein J."/>
            <person name="Schwartz D.C."/>
            <person name="Seeger K."/>
            <person name="Seyler A."/>
            <person name="Sharp S."/>
            <person name="Shin H."/>
            <person name="Sivam D."/>
            <person name="Squares R."/>
            <person name="Squares S."/>
            <person name="Tosato V."/>
            <person name="Vogt C."/>
            <person name="Volckaert G."/>
            <person name="Wambutt R."/>
            <person name="Warren T."/>
            <person name="Wedler H."/>
            <person name="Woodward J."/>
            <person name="Zhou S."/>
            <person name="Zimmermann W."/>
            <person name="Smith D.F."/>
            <person name="Blackwell J.M."/>
            <person name="Stuart K.D."/>
            <person name="Barrell B.G."/>
            <person name="Myler P.J."/>
        </authorList>
    </citation>
    <scope>NUCLEOTIDE SEQUENCE [LARGE SCALE GENOMIC DNA]</scope>
    <source>
        <strain>MHOM/IL/81/Friedlin</strain>
    </source>
</reference>
<feature type="chain" id="PRO_0000370412" description="Ribosome biogenesis protein BOP1 homolog">
    <location>
        <begin position="1"/>
        <end position="808"/>
    </location>
</feature>
<feature type="repeat" description="WD 1">
    <location>
        <begin position="430"/>
        <end position="469"/>
    </location>
</feature>
<feature type="repeat" description="WD 2">
    <location>
        <begin position="640"/>
        <end position="680"/>
    </location>
</feature>
<feature type="repeat" description="WD 3">
    <location>
        <begin position="682"/>
        <end position="720"/>
    </location>
</feature>
<feature type="repeat" description="WD 4">
    <location>
        <begin position="724"/>
        <end position="766"/>
    </location>
</feature>
<feature type="repeat" description="WD 5">
    <location>
        <begin position="777"/>
        <end position="808"/>
    </location>
</feature>
<feature type="region of interest" description="Disordered" evidence="2">
    <location>
        <begin position="1"/>
        <end position="55"/>
    </location>
</feature>
<feature type="compositionally biased region" description="Low complexity" evidence="2">
    <location>
        <begin position="1"/>
        <end position="25"/>
    </location>
</feature>
<feature type="compositionally biased region" description="Low complexity" evidence="2">
    <location>
        <begin position="33"/>
        <end position="50"/>
    </location>
</feature>